<name>SRC_RSVP</name>
<evidence type="ECO:0000250" key="1"/>
<evidence type="ECO:0000255" key="2">
    <source>
        <dbReference type="PROSITE-ProRule" id="PRU00159"/>
    </source>
</evidence>
<evidence type="ECO:0000255" key="3">
    <source>
        <dbReference type="PROSITE-ProRule" id="PRU00191"/>
    </source>
</evidence>
<evidence type="ECO:0000255" key="4">
    <source>
        <dbReference type="PROSITE-ProRule" id="PRU00192"/>
    </source>
</evidence>
<evidence type="ECO:0000255" key="5">
    <source>
        <dbReference type="PROSITE-ProRule" id="PRU10028"/>
    </source>
</evidence>
<evidence type="ECO:0000256" key="6">
    <source>
        <dbReference type="SAM" id="MobiDB-lite"/>
    </source>
</evidence>
<evidence type="ECO:0000269" key="7">
    <source>
    </source>
</evidence>
<evidence type="ECO:0000305" key="8">
    <source>
    </source>
</evidence>
<organismHost>
    <name type="scientific">Gallus gallus</name>
    <name type="common">Chicken</name>
    <dbReference type="NCBI Taxonomy" id="9031"/>
</organismHost>
<organism>
    <name type="scientific">Rous sarcoma virus subgroup C (strain Prague)</name>
    <name type="common">RSV-Pr-C</name>
    <dbReference type="NCBI Taxonomy" id="11888"/>
    <lineage>
        <taxon>Viruses</taxon>
        <taxon>Riboviria</taxon>
        <taxon>Pararnavirae</taxon>
        <taxon>Artverviricota</taxon>
        <taxon>Revtraviricetes</taxon>
        <taxon>Ortervirales</taxon>
        <taxon>Retroviridae</taxon>
        <taxon>Orthoretrovirinae</taxon>
        <taxon>Alpharetrovirus</taxon>
        <taxon>Rous sarcoma virus</taxon>
    </lineage>
</organism>
<gene>
    <name type="primary">V-SRC</name>
</gene>
<feature type="initiator methionine" description="Removed; by host" evidence="1">
    <location>
        <position position="1"/>
    </location>
</feature>
<feature type="chain" id="PRO_0000088152" description="Tyrosine-protein kinase transforming protein Src">
    <location>
        <begin position="2"/>
        <end position="526"/>
    </location>
</feature>
<feature type="domain" description="SH3 1" evidence="4">
    <location>
        <begin position="71"/>
        <end position="139"/>
    </location>
</feature>
<feature type="domain" description="SH3 2" evidence="4">
    <location>
        <begin position="81"/>
        <end position="142"/>
    </location>
</feature>
<feature type="domain" description="SH2" evidence="3">
    <location>
        <begin position="148"/>
        <end position="245"/>
    </location>
</feature>
<feature type="domain" description="Protein kinase" evidence="2">
    <location>
        <begin position="267"/>
        <end position="517"/>
    </location>
</feature>
<feature type="region of interest" description="Disordered" evidence="6">
    <location>
        <begin position="1"/>
        <end position="52"/>
    </location>
</feature>
<feature type="compositionally biased region" description="Basic and acidic residues" evidence="6">
    <location>
        <begin position="7"/>
        <end position="25"/>
    </location>
</feature>
<feature type="active site" description="Proton acceptor" evidence="2 5">
    <location>
        <position position="386"/>
    </location>
</feature>
<feature type="binding site" evidence="2">
    <location>
        <begin position="273"/>
        <end position="281"/>
    </location>
    <ligand>
        <name>ATP</name>
        <dbReference type="ChEBI" id="CHEBI:30616"/>
    </ligand>
</feature>
<feature type="binding site" evidence="2">
    <location>
        <position position="295"/>
    </location>
    <ligand>
        <name>ATP</name>
        <dbReference type="ChEBI" id="CHEBI:30616"/>
    </ligand>
</feature>
<feature type="modified residue" description="Phosphotyrosine; by autocatalysis" evidence="7">
    <location>
        <position position="416"/>
    </location>
</feature>
<feature type="lipid moiety-binding region" description="N-myristoyl glycine; by host" evidence="8">
    <location>
        <position position="2"/>
    </location>
</feature>
<sequence>MGSSKSKPKDPSQRRHSLEPPDSTHHGGFPASQTPDETAAPDAHRNPSRSFGTVATEPKLFWGFNTSDTVTSPQRAGALAGGVTTFVALYDYESWTETDLSFKKGERLQIVNNTEGDWWLAHSLTTGQTGYIPSNYVAPSDSIQAEEWYFGKITRRESERLLLNPENPRGTFLVRKSETAKGAYCLSVSDFDNAKGPNVKHYKIYKLYSGGFYITSRTQFGSLQQLVAYYSKHADGLCHRLANVCPTSKPQTQGLAKDAWEIPRESLRLEAKLGQGCFGEVWMGTWNDTTRVAIKTLKPGTMSPEAFLQEAQVMKKLRHEKLVQLYAVVSEEPIYIVIEYMSKGSLLDFLKGEMGKYLRLPQLVDMAAQIASGMAYVERMNYVHRDLRAANILVGENLVCKVADFGLARLIEDNEYTARQGAKFPIKWTAPEAALYGRFTIKSDVWSFGILLTELTTKGRVPYPGMVNREVLDQVERGYRMPCPPECPESLHDLMCQCWRKDPEERPTFKYLQAQLLPACVLEVAE</sequence>
<proteinExistence type="evidence at protein level"/>
<comment type="function">
    <text>This phosphoprotein, required for both the initiation and the maintenance of neoplastic transformation, is a protein kinase that catalyzes the phosphorylation of tyrosine residues in vitro.</text>
</comment>
<comment type="catalytic activity">
    <reaction evidence="5">
        <text>L-tyrosyl-[protein] + ATP = O-phospho-L-tyrosyl-[protein] + ADP + H(+)</text>
        <dbReference type="Rhea" id="RHEA:10596"/>
        <dbReference type="Rhea" id="RHEA-COMP:10136"/>
        <dbReference type="Rhea" id="RHEA-COMP:20101"/>
        <dbReference type="ChEBI" id="CHEBI:15378"/>
        <dbReference type="ChEBI" id="CHEBI:30616"/>
        <dbReference type="ChEBI" id="CHEBI:46858"/>
        <dbReference type="ChEBI" id="CHEBI:61978"/>
        <dbReference type="ChEBI" id="CHEBI:456216"/>
        <dbReference type="EC" id="2.7.10.2"/>
    </reaction>
</comment>
<comment type="subunit">
    <text evidence="1">Homodimer.</text>
</comment>
<comment type="PTM">
    <text evidence="7">The phosphorylated form is termed pp60v-src.</text>
</comment>
<comment type="similarity">
    <text evidence="2">Belongs to the protein kinase superfamily. Tyr protein kinase family. SRC subfamily.</text>
</comment>
<protein>
    <recommendedName>
        <fullName>Tyrosine-protein kinase transforming protein Src</fullName>
        <ecNumber>2.7.10.2</ecNumber>
    </recommendedName>
    <alternativeName>
        <fullName>pp60v-src</fullName>
        <shortName>p60-Src</shortName>
        <shortName>v-Src</shortName>
    </alternativeName>
</protein>
<keyword id="KW-0002">3D-structure</keyword>
<keyword id="KW-0067">ATP-binding</keyword>
<keyword id="KW-0418">Kinase</keyword>
<keyword id="KW-0449">Lipoprotein</keyword>
<keyword id="KW-0519">Myristate</keyword>
<keyword id="KW-0547">Nucleotide-binding</keyword>
<keyword id="KW-0553">Oncogene</keyword>
<keyword id="KW-0597">Phosphoprotein</keyword>
<keyword id="KW-0677">Repeat</keyword>
<keyword id="KW-0727">SH2 domain</keyword>
<keyword id="KW-0728">SH3 domain</keyword>
<keyword id="KW-0808">Transferase</keyword>
<keyword id="KW-0829">Tyrosine-protein kinase</keyword>
<reference key="1">
    <citation type="journal article" date="1983" name="Cell">
        <title>Nucleotide sequence of Rous sarcoma virus.</title>
        <authorList>
            <person name="Schwartz D."/>
            <person name="Tizard R."/>
            <person name="Gilbert W."/>
        </authorList>
    </citation>
    <scope>NUCLEOTIDE SEQUENCE [GENOMIC RNA]</scope>
</reference>
<reference key="2">
    <citation type="submission" date="1997-11" db="EMBL/GenBank/DDBJ databases">
        <authorList>
            <person name="Chappey C."/>
        </authorList>
    </citation>
    <scope>NUCLEOTIDE SEQUENCE [LARGE SCALE GENOMIC DNA]</scope>
</reference>
<reference key="3">
    <citation type="journal article" date="1981" name="Nature">
        <title>Homologous tyrosine phosphorylation sites in transformation-specific gene products of distinct avian sarcoma viruses.</title>
        <authorList>
            <person name="Neil J.C."/>
            <person name="Ghysdael J."/>
            <person name="Vogt P.K."/>
            <person name="Smart J.E."/>
        </authorList>
    </citation>
    <scope>PHOSPHORYLATION AT TYR-416</scope>
</reference>
<reference key="4">
    <citation type="journal article" date="1988" name="Mol. Cell. Biol.">
        <title>The first seven amino acids encoded by the v-src oncogene act as a myristylation signal: lysine 7 is a critical determinant.</title>
        <authorList>
            <person name="Kaplan J.M."/>
            <person name="Mardon G."/>
            <person name="Bishop J.M."/>
            <person name="Varmus H.E."/>
        </authorList>
    </citation>
    <scope>MYRISTOYLATION AT GLY-2</scope>
    <source>
        <strain>Prague subtype A</strain>
    </source>
</reference>
<accession>P00526</accession>
<accession>O92806</accession>
<dbReference type="EC" id="2.7.10.2"/>
<dbReference type="EMBL" id="J02342">
    <property type="protein sequence ID" value="AAB59935.1"/>
    <property type="molecule type" value="Genomic_RNA"/>
</dbReference>
<dbReference type="EMBL" id="AF033808">
    <property type="protein sequence ID" value="AAC82563.1"/>
    <property type="molecule type" value="Genomic_RNA"/>
</dbReference>
<dbReference type="PIR" id="A00632">
    <property type="entry name" value="TVFVR"/>
</dbReference>
<dbReference type="PIR" id="S15582">
    <property type="entry name" value="S15582"/>
</dbReference>
<dbReference type="PDB" id="5YMW">
    <property type="method" value="X-ray"/>
    <property type="resolution" value="2.00 A"/>
    <property type="chains" value="C/F/I/L=517-524"/>
</dbReference>
<dbReference type="PDBsum" id="5YMW"/>
<dbReference type="BMRB" id="P00526"/>
<dbReference type="SMR" id="P00526"/>
<dbReference type="iPTMnet" id="P00526"/>
<dbReference type="KEGG" id="vg:1491925"/>
<dbReference type="BRENDA" id="2.7.10.2">
    <property type="organism ID" value="5464"/>
</dbReference>
<dbReference type="Proteomes" id="UP000007183">
    <property type="component" value="Segment"/>
</dbReference>
<dbReference type="Proteomes" id="UP000137552">
    <property type="component" value="Segment"/>
</dbReference>
<dbReference type="GO" id="GO:0005524">
    <property type="term" value="F:ATP binding"/>
    <property type="evidence" value="ECO:0007669"/>
    <property type="project" value="UniProtKB-KW"/>
</dbReference>
<dbReference type="GO" id="GO:0004715">
    <property type="term" value="F:non-membrane spanning protein tyrosine kinase activity"/>
    <property type="evidence" value="ECO:0007669"/>
    <property type="project" value="UniProtKB-EC"/>
</dbReference>
<dbReference type="CDD" id="cd12008">
    <property type="entry name" value="SH3_Src"/>
    <property type="match status" value="1"/>
</dbReference>
<dbReference type="FunFam" id="1.10.510.10:FF:000553">
    <property type="entry name" value="Tyrosine-protein kinase"/>
    <property type="match status" value="1"/>
</dbReference>
<dbReference type="FunFam" id="2.30.30.40:FF:000083">
    <property type="entry name" value="Tyrosine-protein kinase"/>
    <property type="match status" value="1"/>
</dbReference>
<dbReference type="FunFam" id="3.30.200.20:FF:000016">
    <property type="entry name" value="Tyrosine-protein kinase"/>
    <property type="match status" value="1"/>
</dbReference>
<dbReference type="FunFam" id="3.30.505.10:FF:000001">
    <property type="entry name" value="Tyrosine-protein kinase"/>
    <property type="match status" value="1"/>
</dbReference>
<dbReference type="Gene3D" id="3.30.200.20">
    <property type="entry name" value="Phosphorylase Kinase, domain 1"/>
    <property type="match status" value="1"/>
</dbReference>
<dbReference type="Gene3D" id="3.30.505.10">
    <property type="entry name" value="SH2 domain"/>
    <property type="match status" value="1"/>
</dbReference>
<dbReference type="Gene3D" id="2.30.30.40">
    <property type="entry name" value="SH3 Domains"/>
    <property type="match status" value="1"/>
</dbReference>
<dbReference type="Gene3D" id="1.10.510.10">
    <property type="entry name" value="Transferase(Phosphotransferase) domain 1"/>
    <property type="match status" value="1"/>
</dbReference>
<dbReference type="InterPro" id="IPR011009">
    <property type="entry name" value="Kinase-like_dom_sf"/>
</dbReference>
<dbReference type="InterPro" id="IPR050198">
    <property type="entry name" value="Non-receptor_tyrosine_kinases"/>
</dbReference>
<dbReference type="InterPro" id="IPR000719">
    <property type="entry name" value="Prot_kinase_dom"/>
</dbReference>
<dbReference type="InterPro" id="IPR017441">
    <property type="entry name" value="Protein_kinase_ATP_BS"/>
</dbReference>
<dbReference type="InterPro" id="IPR001245">
    <property type="entry name" value="Ser-Thr/Tyr_kinase_cat_dom"/>
</dbReference>
<dbReference type="InterPro" id="IPR000980">
    <property type="entry name" value="SH2"/>
</dbReference>
<dbReference type="InterPro" id="IPR036860">
    <property type="entry name" value="SH2_dom_sf"/>
</dbReference>
<dbReference type="InterPro" id="IPR036028">
    <property type="entry name" value="SH3-like_dom_sf"/>
</dbReference>
<dbReference type="InterPro" id="IPR001452">
    <property type="entry name" value="SH3_domain"/>
</dbReference>
<dbReference type="InterPro" id="IPR008266">
    <property type="entry name" value="Tyr_kinase_AS"/>
</dbReference>
<dbReference type="InterPro" id="IPR020635">
    <property type="entry name" value="Tyr_kinase_cat_dom"/>
</dbReference>
<dbReference type="PANTHER" id="PTHR24418">
    <property type="entry name" value="TYROSINE-PROTEIN KINASE"/>
    <property type="match status" value="1"/>
</dbReference>
<dbReference type="Pfam" id="PF07714">
    <property type="entry name" value="PK_Tyr_Ser-Thr"/>
    <property type="match status" value="1"/>
</dbReference>
<dbReference type="Pfam" id="PF00017">
    <property type="entry name" value="SH2"/>
    <property type="match status" value="1"/>
</dbReference>
<dbReference type="Pfam" id="PF00018">
    <property type="entry name" value="SH3_1"/>
    <property type="match status" value="1"/>
</dbReference>
<dbReference type="PRINTS" id="PR00401">
    <property type="entry name" value="SH2DOMAIN"/>
</dbReference>
<dbReference type="PRINTS" id="PR00452">
    <property type="entry name" value="SH3DOMAIN"/>
</dbReference>
<dbReference type="PRINTS" id="PR00109">
    <property type="entry name" value="TYRKINASE"/>
</dbReference>
<dbReference type="SMART" id="SM00252">
    <property type="entry name" value="SH2"/>
    <property type="match status" value="1"/>
</dbReference>
<dbReference type="SMART" id="SM00326">
    <property type="entry name" value="SH3"/>
    <property type="match status" value="1"/>
</dbReference>
<dbReference type="SMART" id="SM00219">
    <property type="entry name" value="TyrKc"/>
    <property type="match status" value="1"/>
</dbReference>
<dbReference type="SUPFAM" id="SSF56112">
    <property type="entry name" value="Protein kinase-like (PK-like)"/>
    <property type="match status" value="1"/>
</dbReference>
<dbReference type="SUPFAM" id="SSF55550">
    <property type="entry name" value="SH2 domain"/>
    <property type="match status" value="1"/>
</dbReference>
<dbReference type="SUPFAM" id="SSF50044">
    <property type="entry name" value="SH3-domain"/>
    <property type="match status" value="1"/>
</dbReference>
<dbReference type="PROSITE" id="PS00107">
    <property type="entry name" value="PROTEIN_KINASE_ATP"/>
    <property type="match status" value="1"/>
</dbReference>
<dbReference type="PROSITE" id="PS50011">
    <property type="entry name" value="PROTEIN_KINASE_DOM"/>
    <property type="match status" value="1"/>
</dbReference>
<dbReference type="PROSITE" id="PS00109">
    <property type="entry name" value="PROTEIN_KINASE_TYR"/>
    <property type="match status" value="1"/>
</dbReference>
<dbReference type="PROSITE" id="PS50001">
    <property type="entry name" value="SH2"/>
    <property type="match status" value="1"/>
</dbReference>
<dbReference type="PROSITE" id="PS50002">
    <property type="entry name" value="SH3"/>
    <property type="match status" value="1"/>
</dbReference>